<gene>
    <name evidence="1" type="primary">cobQ</name>
    <name type="ordered locus">PSEEN1383</name>
</gene>
<keyword id="KW-0169">Cobalamin biosynthesis</keyword>
<keyword id="KW-0315">Glutamine amidotransferase</keyword>
<protein>
    <recommendedName>
        <fullName evidence="1">Cobyric acid synthase</fullName>
    </recommendedName>
</protein>
<organism>
    <name type="scientific">Pseudomonas entomophila (strain L48)</name>
    <dbReference type="NCBI Taxonomy" id="384676"/>
    <lineage>
        <taxon>Bacteria</taxon>
        <taxon>Pseudomonadati</taxon>
        <taxon>Pseudomonadota</taxon>
        <taxon>Gammaproteobacteria</taxon>
        <taxon>Pseudomonadales</taxon>
        <taxon>Pseudomonadaceae</taxon>
        <taxon>Pseudomonas</taxon>
    </lineage>
</organism>
<comment type="function">
    <text evidence="1">Catalyzes amidations at positions B, D, E, and G on adenosylcobyrinic A,C-diamide. NH(2) groups are provided by glutamine, and one molecule of ATP is hydrogenolyzed for each amidation.</text>
</comment>
<comment type="pathway">
    <text evidence="1">Cofactor biosynthesis; adenosylcobalamin biosynthesis.</text>
</comment>
<comment type="similarity">
    <text evidence="1">Belongs to the CobB/CobQ family. CobQ subfamily.</text>
</comment>
<feature type="chain" id="PRO_0000332369" description="Cobyric acid synthase">
    <location>
        <begin position="1"/>
        <end position="487"/>
    </location>
</feature>
<feature type="domain" description="GATase cobBQ-type" evidence="1">
    <location>
        <begin position="248"/>
        <end position="435"/>
    </location>
</feature>
<feature type="active site" description="Nucleophile" evidence="1">
    <location>
        <position position="329"/>
    </location>
</feature>
<feature type="active site" evidence="1">
    <location>
        <position position="427"/>
    </location>
</feature>
<reference key="1">
    <citation type="journal article" date="2006" name="Nat. Biotechnol.">
        <title>Complete genome sequence of the entomopathogenic and metabolically versatile soil bacterium Pseudomonas entomophila.</title>
        <authorList>
            <person name="Vodovar N."/>
            <person name="Vallenet D."/>
            <person name="Cruveiller S."/>
            <person name="Rouy Z."/>
            <person name="Barbe V."/>
            <person name="Acosta C."/>
            <person name="Cattolico L."/>
            <person name="Jubin C."/>
            <person name="Lajus A."/>
            <person name="Segurens B."/>
            <person name="Vacherie B."/>
            <person name="Wincker P."/>
            <person name="Weissenbach J."/>
            <person name="Lemaitre B."/>
            <person name="Medigue C."/>
            <person name="Boccard F."/>
        </authorList>
    </citation>
    <scope>NUCLEOTIDE SEQUENCE [LARGE SCALE GENOMIC DNA]</scope>
    <source>
        <strain>L48</strain>
    </source>
</reference>
<proteinExistence type="inferred from homology"/>
<accession>Q1IDJ9</accession>
<evidence type="ECO:0000255" key="1">
    <source>
        <dbReference type="HAMAP-Rule" id="MF_00028"/>
    </source>
</evidence>
<dbReference type="EMBL" id="CT573326">
    <property type="protein sequence ID" value="CAK14260.1"/>
    <property type="molecule type" value="Genomic_DNA"/>
</dbReference>
<dbReference type="RefSeq" id="WP_011532676.1">
    <property type="nucleotide sequence ID" value="NC_008027.1"/>
</dbReference>
<dbReference type="SMR" id="Q1IDJ9"/>
<dbReference type="STRING" id="384676.PSEEN1383"/>
<dbReference type="GeneID" id="32804647"/>
<dbReference type="KEGG" id="pen:PSEEN1383"/>
<dbReference type="eggNOG" id="COG1492">
    <property type="taxonomic scope" value="Bacteria"/>
</dbReference>
<dbReference type="HOGENOM" id="CLU_019250_2_2_6"/>
<dbReference type="OrthoDB" id="9808302at2"/>
<dbReference type="UniPathway" id="UPA00148"/>
<dbReference type="Proteomes" id="UP000000658">
    <property type="component" value="Chromosome"/>
</dbReference>
<dbReference type="GO" id="GO:0015420">
    <property type="term" value="F:ABC-type vitamin B12 transporter activity"/>
    <property type="evidence" value="ECO:0007669"/>
    <property type="project" value="UniProtKB-UniRule"/>
</dbReference>
<dbReference type="GO" id="GO:0003824">
    <property type="term" value="F:catalytic activity"/>
    <property type="evidence" value="ECO:0007669"/>
    <property type="project" value="InterPro"/>
</dbReference>
<dbReference type="GO" id="GO:0009236">
    <property type="term" value="P:cobalamin biosynthetic process"/>
    <property type="evidence" value="ECO:0007669"/>
    <property type="project" value="UniProtKB-UniRule"/>
</dbReference>
<dbReference type="CDD" id="cd05389">
    <property type="entry name" value="CobQ_N"/>
    <property type="match status" value="1"/>
</dbReference>
<dbReference type="CDD" id="cd01750">
    <property type="entry name" value="GATase1_CobQ"/>
    <property type="match status" value="1"/>
</dbReference>
<dbReference type="Gene3D" id="3.40.50.880">
    <property type="match status" value="1"/>
</dbReference>
<dbReference type="Gene3D" id="3.40.50.300">
    <property type="entry name" value="P-loop containing nucleotide triphosphate hydrolases"/>
    <property type="match status" value="1"/>
</dbReference>
<dbReference type="HAMAP" id="MF_00028">
    <property type="entry name" value="CobQ"/>
    <property type="match status" value="1"/>
</dbReference>
<dbReference type="InterPro" id="IPR029062">
    <property type="entry name" value="Class_I_gatase-like"/>
</dbReference>
<dbReference type="InterPro" id="IPR002586">
    <property type="entry name" value="CobQ/CobB/MinD/ParA_Nub-bd_dom"/>
</dbReference>
<dbReference type="InterPro" id="IPR033949">
    <property type="entry name" value="CobQ_GATase1"/>
</dbReference>
<dbReference type="InterPro" id="IPR047045">
    <property type="entry name" value="CobQ_N"/>
</dbReference>
<dbReference type="InterPro" id="IPR004459">
    <property type="entry name" value="CobQ_synth"/>
</dbReference>
<dbReference type="InterPro" id="IPR011698">
    <property type="entry name" value="GATase_3"/>
</dbReference>
<dbReference type="InterPro" id="IPR027417">
    <property type="entry name" value="P-loop_NTPase"/>
</dbReference>
<dbReference type="NCBIfam" id="TIGR00313">
    <property type="entry name" value="cobQ"/>
    <property type="match status" value="1"/>
</dbReference>
<dbReference type="NCBIfam" id="NF001989">
    <property type="entry name" value="PRK00784.1"/>
    <property type="match status" value="1"/>
</dbReference>
<dbReference type="PANTHER" id="PTHR21343:SF1">
    <property type="entry name" value="COBYRIC ACID SYNTHASE"/>
    <property type="match status" value="1"/>
</dbReference>
<dbReference type="PANTHER" id="PTHR21343">
    <property type="entry name" value="DETHIOBIOTIN SYNTHETASE"/>
    <property type="match status" value="1"/>
</dbReference>
<dbReference type="Pfam" id="PF01656">
    <property type="entry name" value="CbiA"/>
    <property type="match status" value="1"/>
</dbReference>
<dbReference type="Pfam" id="PF07685">
    <property type="entry name" value="GATase_3"/>
    <property type="match status" value="1"/>
</dbReference>
<dbReference type="SUPFAM" id="SSF52317">
    <property type="entry name" value="Class I glutamine amidotransferase-like"/>
    <property type="match status" value="1"/>
</dbReference>
<dbReference type="SUPFAM" id="SSF52540">
    <property type="entry name" value="P-loop containing nucleoside triphosphate hydrolases"/>
    <property type="match status" value="1"/>
</dbReference>
<dbReference type="PROSITE" id="PS51274">
    <property type="entry name" value="GATASE_COBBQ"/>
    <property type="match status" value="1"/>
</dbReference>
<name>COBQ_PSEE4</name>
<sequence>MTTLMVQGTTSDAGKSTLVTALCRWLLRQGVAVVPFKPQNMALNSAVTADGGEIGRAQAVQAQACRLAPHTDMNPVLLKPNSDTGAQVIVHGRAVTSMNAVAYHDYKVIAMQAVLASHERLRQAYPVVMVEGAGSPAEINLRAGDIANMGFAEAVDCPVILIADINRGGVFAHLVGTLELLSPSEQARVKGFVINRFRGDIALLQPGLDWLEQRTGKPVLGVLPYVTDLHLEAEDAIDVRQAVKGERVLKVIVPVLPRISNHTDFDPLRLHPQVDLQFIGPGQPIPPADLIILPGSKSVRADLSQLRERGWDSAIARHLRYGGKLIGICGGLQMLGHEVHDPLGLEGAAGSSAGLGLLDYSTVLEAEKQLRNVAGTLGLEQAPVSGYEIHAGVTHGPGLEHPAVQLDDGRNDGAISADGQILATYLHGLFEGSQSCAALLRWAGLADAQAIDYEALRERDIERLADLVEQHLDTERLRQLCGVTADA</sequence>